<sequence length="504" mass="54332">MTQTNGFDALHAHAQRLRGAAIPALLAAEPERPTQYAWQVGPLYFNFARQKYDRAALDALFAIARERDLAGAFQRLFRGEQVNVTEQRAALHTALRGDLTDAPVASEAYATAAEVRQRMGALIQQLEATDVTDIVSVGIGGSDLGPRLVADALRPVSGARLRVHFVSNVDGAAMQRTLATLDPARTAGILISKTFGTQETLLNGSILHAWLGGSERLYAVSANPERAAKAFDIAPGRVLPMWDWVGGRYSLWSAVGFPIALAIGFERFEQLLEGAAQFDAHALNTPLEENVAVLHGLTAVWNRNLLGSATHAVMTYDQRLALLPAYLQQLVMESLGKRVKLDGSTVDSDTVSVWWGGAGTDVQHSFFQALHQGTSVVPADFIGTVHNDDPYAENHVALMANVLAQTEALANGQDSSDPHRSYPGGRPSTVILLDALTPQALGALISMYEHSVYVQSVMWGINAFDQFGVELGKQLASQLLPALKGESADVADPVTRELLSKLRG</sequence>
<dbReference type="EC" id="5.3.1.9" evidence="1"/>
<dbReference type="EMBL" id="CP000967">
    <property type="protein sequence ID" value="ACD58805.1"/>
    <property type="molecule type" value="Genomic_DNA"/>
</dbReference>
<dbReference type="RefSeq" id="WP_012444846.1">
    <property type="nucleotide sequence ID" value="NC_010717.2"/>
</dbReference>
<dbReference type="SMR" id="B2SJM1"/>
<dbReference type="KEGG" id="xop:PXO_00687"/>
<dbReference type="eggNOG" id="COG0166">
    <property type="taxonomic scope" value="Bacteria"/>
</dbReference>
<dbReference type="HOGENOM" id="CLU_017947_3_1_6"/>
<dbReference type="UniPathway" id="UPA00109">
    <property type="reaction ID" value="UER00181"/>
</dbReference>
<dbReference type="UniPathway" id="UPA00138"/>
<dbReference type="Proteomes" id="UP000001740">
    <property type="component" value="Chromosome"/>
</dbReference>
<dbReference type="GO" id="GO:0005829">
    <property type="term" value="C:cytosol"/>
    <property type="evidence" value="ECO:0007669"/>
    <property type="project" value="TreeGrafter"/>
</dbReference>
<dbReference type="GO" id="GO:0097367">
    <property type="term" value="F:carbohydrate derivative binding"/>
    <property type="evidence" value="ECO:0007669"/>
    <property type="project" value="InterPro"/>
</dbReference>
<dbReference type="GO" id="GO:0004347">
    <property type="term" value="F:glucose-6-phosphate isomerase activity"/>
    <property type="evidence" value="ECO:0007669"/>
    <property type="project" value="UniProtKB-UniRule"/>
</dbReference>
<dbReference type="GO" id="GO:0048029">
    <property type="term" value="F:monosaccharide binding"/>
    <property type="evidence" value="ECO:0007669"/>
    <property type="project" value="TreeGrafter"/>
</dbReference>
<dbReference type="GO" id="GO:0006094">
    <property type="term" value="P:gluconeogenesis"/>
    <property type="evidence" value="ECO:0007669"/>
    <property type="project" value="UniProtKB-UniRule"/>
</dbReference>
<dbReference type="GO" id="GO:0051156">
    <property type="term" value="P:glucose 6-phosphate metabolic process"/>
    <property type="evidence" value="ECO:0007669"/>
    <property type="project" value="TreeGrafter"/>
</dbReference>
<dbReference type="GO" id="GO:0006096">
    <property type="term" value="P:glycolytic process"/>
    <property type="evidence" value="ECO:0007669"/>
    <property type="project" value="UniProtKB-UniRule"/>
</dbReference>
<dbReference type="CDD" id="cd05015">
    <property type="entry name" value="SIS_PGI_1"/>
    <property type="match status" value="1"/>
</dbReference>
<dbReference type="CDD" id="cd05016">
    <property type="entry name" value="SIS_PGI_2"/>
    <property type="match status" value="1"/>
</dbReference>
<dbReference type="Gene3D" id="1.10.1390.10">
    <property type="match status" value="1"/>
</dbReference>
<dbReference type="Gene3D" id="3.40.50.10490">
    <property type="entry name" value="Glucose-6-phosphate isomerase like protein, domain 1"/>
    <property type="match status" value="2"/>
</dbReference>
<dbReference type="HAMAP" id="MF_00473">
    <property type="entry name" value="G6P_isomerase"/>
    <property type="match status" value="1"/>
</dbReference>
<dbReference type="InterPro" id="IPR001672">
    <property type="entry name" value="G6P_Isomerase"/>
</dbReference>
<dbReference type="InterPro" id="IPR023096">
    <property type="entry name" value="G6P_Isomerase_C"/>
</dbReference>
<dbReference type="InterPro" id="IPR018189">
    <property type="entry name" value="Phosphoglucose_isomerase_CS"/>
</dbReference>
<dbReference type="InterPro" id="IPR046348">
    <property type="entry name" value="SIS_dom_sf"/>
</dbReference>
<dbReference type="InterPro" id="IPR035476">
    <property type="entry name" value="SIS_PGI_1"/>
</dbReference>
<dbReference type="InterPro" id="IPR035482">
    <property type="entry name" value="SIS_PGI_2"/>
</dbReference>
<dbReference type="NCBIfam" id="NF001211">
    <property type="entry name" value="PRK00179.1"/>
    <property type="match status" value="1"/>
</dbReference>
<dbReference type="PANTHER" id="PTHR11469">
    <property type="entry name" value="GLUCOSE-6-PHOSPHATE ISOMERASE"/>
    <property type="match status" value="1"/>
</dbReference>
<dbReference type="PANTHER" id="PTHR11469:SF1">
    <property type="entry name" value="GLUCOSE-6-PHOSPHATE ISOMERASE"/>
    <property type="match status" value="1"/>
</dbReference>
<dbReference type="Pfam" id="PF00342">
    <property type="entry name" value="PGI"/>
    <property type="match status" value="1"/>
</dbReference>
<dbReference type="PRINTS" id="PR00662">
    <property type="entry name" value="G6PISOMERASE"/>
</dbReference>
<dbReference type="SUPFAM" id="SSF53697">
    <property type="entry name" value="SIS domain"/>
    <property type="match status" value="1"/>
</dbReference>
<dbReference type="PROSITE" id="PS00765">
    <property type="entry name" value="P_GLUCOSE_ISOMERASE_1"/>
    <property type="match status" value="1"/>
</dbReference>
<dbReference type="PROSITE" id="PS00174">
    <property type="entry name" value="P_GLUCOSE_ISOMERASE_2"/>
    <property type="match status" value="1"/>
</dbReference>
<dbReference type="PROSITE" id="PS51463">
    <property type="entry name" value="P_GLUCOSE_ISOMERASE_3"/>
    <property type="match status" value="1"/>
</dbReference>
<reference key="1">
    <citation type="journal article" date="2008" name="BMC Genomics">
        <title>Genome sequence and rapid evolution of the rice pathogen Xanthomonas oryzae pv. oryzae PXO99A.</title>
        <authorList>
            <person name="Salzberg S.L."/>
            <person name="Sommer D.D."/>
            <person name="Schatz M.C."/>
            <person name="Phillippy A.M."/>
            <person name="Rabinowicz P.D."/>
            <person name="Tsuge S."/>
            <person name="Furutani A."/>
            <person name="Ochiai H."/>
            <person name="Delcher A.L."/>
            <person name="Kelley D."/>
            <person name="Madupu R."/>
            <person name="Puiu D."/>
            <person name="Radune D."/>
            <person name="Shumway M."/>
            <person name="Trapnell C."/>
            <person name="Aparna G."/>
            <person name="Jha G."/>
            <person name="Pandey A."/>
            <person name="Patil P.B."/>
            <person name="Ishihara H."/>
            <person name="Meyer D.F."/>
            <person name="Szurek B."/>
            <person name="Verdier V."/>
            <person name="Koebnik R."/>
            <person name="Dow J.M."/>
            <person name="Ryan R.P."/>
            <person name="Hirata H."/>
            <person name="Tsuyumu S."/>
            <person name="Won Lee S."/>
            <person name="Seo Y.-S."/>
            <person name="Sriariyanum M."/>
            <person name="Ronald P.C."/>
            <person name="Sonti R.V."/>
            <person name="Van Sluys M.-A."/>
            <person name="Leach J.E."/>
            <person name="White F.F."/>
            <person name="Bogdanove A.J."/>
        </authorList>
    </citation>
    <scope>NUCLEOTIDE SEQUENCE [LARGE SCALE GENOMIC DNA]</scope>
    <source>
        <strain>PXO99A</strain>
    </source>
</reference>
<organism>
    <name type="scientific">Xanthomonas oryzae pv. oryzae (strain PXO99A)</name>
    <dbReference type="NCBI Taxonomy" id="360094"/>
    <lineage>
        <taxon>Bacteria</taxon>
        <taxon>Pseudomonadati</taxon>
        <taxon>Pseudomonadota</taxon>
        <taxon>Gammaproteobacteria</taxon>
        <taxon>Lysobacterales</taxon>
        <taxon>Lysobacteraceae</taxon>
        <taxon>Xanthomonas</taxon>
    </lineage>
</organism>
<keyword id="KW-0963">Cytoplasm</keyword>
<keyword id="KW-0312">Gluconeogenesis</keyword>
<keyword id="KW-0324">Glycolysis</keyword>
<keyword id="KW-0413">Isomerase</keyword>
<proteinExistence type="inferred from homology"/>
<protein>
    <recommendedName>
        <fullName evidence="1">Glucose-6-phosphate isomerase</fullName>
        <shortName evidence="1">GPI</shortName>
        <ecNumber evidence="1">5.3.1.9</ecNumber>
    </recommendedName>
    <alternativeName>
        <fullName evidence="1">Phosphoglucose isomerase</fullName>
        <shortName evidence="1">PGI</shortName>
    </alternativeName>
    <alternativeName>
        <fullName evidence="1">Phosphohexose isomerase</fullName>
        <shortName evidence="1">PHI</shortName>
    </alternativeName>
</protein>
<comment type="function">
    <text evidence="1">Catalyzes the reversible isomerization of glucose-6-phosphate to fructose-6-phosphate.</text>
</comment>
<comment type="catalytic activity">
    <reaction evidence="1">
        <text>alpha-D-glucose 6-phosphate = beta-D-fructose 6-phosphate</text>
        <dbReference type="Rhea" id="RHEA:11816"/>
        <dbReference type="ChEBI" id="CHEBI:57634"/>
        <dbReference type="ChEBI" id="CHEBI:58225"/>
        <dbReference type="EC" id="5.3.1.9"/>
    </reaction>
</comment>
<comment type="pathway">
    <text evidence="1">Carbohydrate biosynthesis; gluconeogenesis.</text>
</comment>
<comment type="pathway">
    <text evidence="1">Carbohydrate degradation; glycolysis; D-glyceraldehyde 3-phosphate and glycerone phosphate from D-glucose: step 2/4.</text>
</comment>
<comment type="subcellular location">
    <subcellularLocation>
        <location evidence="1">Cytoplasm</location>
    </subcellularLocation>
</comment>
<comment type="similarity">
    <text evidence="1">Belongs to the GPI family.</text>
</comment>
<name>G6PI_XANOP</name>
<evidence type="ECO:0000255" key="1">
    <source>
        <dbReference type="HAMAP-Rule" id="MF_00473"/>
    </source>
</evidence>
<feature type="chain" id="PRO_1000125775" description="Glucose-6-phosphate isomerase">
    <location>
        <begin position="1"/>
        <end position="504"/>
    </location>
</feature>
<feature type="active site" description="Proton donor" evidence="1">
    <location>
        <position position="333"/>
    </location>
</feature>
<feature type="active site" evidence="1">
    <location>
        <position position="364"/>
    </location>
</feature>
<feature type="active site" evidence="1">
    <location>
        <position position="473"/>
    </location>
</feature>
<gene>
    <name evidence="1" type="primary">pgi</name>
    <name type="ordered locus">PXO_00687</name>
</gene>
<accession>B2SJM1</accession>